<comment type="function">
    <text evidence="1">One of the primary rRNA binding proteins. Required for association of the 30S and 50S subunits to form the 70S ribosome, for tRNA binding and peptide bond formation. It has been suggested to have peptidyltransferase activity; this is somewhat controversial. Makes several contacts with the 16S rRNA in the 70S ribosome.</text>
</comment>
<comment type="subunit">
    <text evidence="1">Part of the 50S ribosomal subunit. Forms a bridge to the 30S subunit in the 70S ribosome.</text>
</comment>
<comment type="similarity">
    <text evidence="1">Belongs to the universal ribosomal protein uL2 family.</text>
</comment>
<proteinExistence type="inferred from homology"/>
<dbReference type="EMBL" id="AM286280">
    <property type="protein sequence ID" value="CAL08344.1"/>
    <property type="molecule type" value="Genomic_DNA"/>
</dbReference>
<dbReference type="RefSeq" id="WP_003027197.1">
    <property type="nucleotide sequence ID" value="NC_008245.1"/>
</dbReference>
<dbReference type="SMR" id="Q14JB7"/>
<dbReference type="GeneID" id="75264258"/>
<dbReference type="KEGG" id="ftf:FTF0328"/>
<dbReference type="HOGENOM" id="CLU_036235_2_1_6"/>
<dbReference type="GO" id="GO:0015934">
    <property type="term" value="C:large ribosomal subunit"/>
    <property type="evidence" value="ECO:0007669"/>
    <property type="project" value="InterPro"/>
</dbReference>
<dbReference type="GO" id="GO:0019843">
    <property type="term" value="F:rRNA binding"/>
    <property type="evidence" value="ECO:0007669"/>
    <property type="project" value="UniProtKB-UniRule"/>
</dbReference>
<dbReference type="GO" id="GO:0003735">
    <property type="term" value="F:structural constituent of ribosome"/>
    <property type="evidence" value="ECO:0007669"/>
    <property type="project" value="InterPro"/>
</dbReference>
<dbReference type="GO" id="GO:0016740">
    <property type="term" value="F:transferase activity"/>
    <property type="evidence" value="ECO:0007669"/>
    <property type="project" value="InterPro"/>
</dbReference>
<dbReference type="GO" id="GO:0002181">
    <property type="term" value="P:cytoplasmic translation"/>
    <property type="evidence" value="ECO:0007669"/>
    <property type="project" value="TreeGrafter"/>
</dbReference>
<dbReference type="FunFam" id="2.30.30.30:FF:000001">
    <property type="entry name" value="50S ribosomal protein L2"/>
    <property type="match status" value="1"/>
</dbReference>
<dbReference type="FunFam" id="2.40.50.140:FF:000003">
    <property type="entry name" value="50S ribosomal protein L2"/>
    <property type="match status" value="1"/>
</dbReference>
<dbReference type="FunFam" id="4.10.950.10:FF:000001">
    <property type="entry name" value="50S ribosomal protein L2"/>
    <property type="match status" value="1"/>
</dbReference>
<dbReference type="Gene3D" id="2.30.30.30">
    <property type="match status" value="1"/>
</dbReference>
<dbReference type="Gene3D" id="2.40.50.140">
    <property type="entry name" value="Nucleic acid-binding proteins"/>
    <property type="match status" value="1"/>
</dbReference>
<dbReference type="Gene3D" id="4.10.950.10">
    <property type="entry name" value="Ribosomal protein L2, domain 3"/>
    <property type="match status" value="1"/>
</dbReference>
<dbReference type="HAMAP" id="MF_01320_B">
    <property type="entry name" value="Ribosomal_uL2_B"/>
    <property type="match status" value="1"/>
</dbReference>
<dbReference type="InterPro" id="IPR012340">
    <property type="entry name" value="NA-bd_OB-fold"/>
</dbReference>
<dbReference type="InterPro" id="IPR014722">
    <property type="entry name" value="Rib_uL2_dom2"/>
</dbReference>
<dbReference type="InterPro" id="IPR002171">
    <property type="entry name" value="Ribosomal_uL2"/>
</dbReference>
<dbReference type="InterPro" id="IPR005880">
    <property type="entry name" value="Ribosomal_uL2_bac/org-type"/>
</dbReference>
<dbReference type="InterPro" id="IPR022669">
    <property type="entry name" value="Ribosomal_uL2_C"/>
</dbReference>
<dbReference type="InterPro" id="IPR022671">
    <property type="entry name" value="Ribosomal_uL2_CS"/>
</dbReference>
<dbReference type="InterPro" id="IPR014726">
    <property type="entry name" value="Ribosomal_uL2_dom3"/>
</dbReference>
<dbReference type="InterPro" id="IPR022666">
    <property type="entry name" value="Ribosomal_uL2_RNA-bd_dom"/>
</dbReference>
<dbReference type="InterPro" id="IPR008991">
    <property type="entry name" value="Translation_prot_SH3-like_sf"/>
</dbReference>
<dbReference type="NCBIfam" id="TIGR01171">
    <property type="entry name" value="rplB_bact"/>
    <property type="match status" value="1"/>
</dbReference>
<dbReference type="PANTHER" id="PTHR13691:SF5">
    <property type="entry name" value="LARGE RIBOSOMAL SUBUNIT PROTEIN UL2M"/>
    <property type="match status" value="1"/>
</dbReference>
<dbReference type="PANTHER" id="PTHR13691">
    <property type="entry name" value="RIBOSOMAL PROTEIN L2"/>
    <property type="match status" value="1"/>
</dbReference>
<dbReference type="Pfam" id="PF00181">
    <property type="entry name" value="Ribosomal_L2"/>
    <property type="match status" value="1"/>
</dbReference>
<dbReference type="Pfam" id="PF03947">
    <property type="entry name" value="Ribosomal_L2_C"/>
    <property type="match status" value="1"/>
</dbReference>
<dbReference type="PIRSF" id="PIRSF002158">
    <property type="entry name" value="Ribosomal_L2"/>
    <property type="match status" value="1"/>
</dbReference>
<dbReference type="SMART" id="SM01383">
    <property type="entry name" value="Ribosomal_L2"/>
    <property type="match status" value="1"/>
</dbReference>
<dbReference type="SMART" id="SM01382">
    <property type="entry name" value="Ribosomal_L2_C"/>
    <property type="match status" value="1"/>
</dbReference>
<dbReference type="SUPFAM" id="SSF50249">
    <property type="entry name" value="Nucleic acid-binding proteins"/>
    <property type="match status" value="1"/>
</dbReference>
<dbReference type="SUPFAM" id="SSF50104">
    <property type="entry name" value="Translation proteins SH3-like domain"/>
    <property type="match status" value="1"/>
</dbReference>
<dbReference type="PROSITE" id="PS00467">
    <property type="entry name" value="RIBOSOMAL_L2"/>
    <property type="match status" value="1"/>
</dbReference>
<protein>
    <recommendedName>
        <fullName evidence="1">Large ribosomal subunit protein uL2</fullName>
    </recommendedName>
    <alternativeName>
        <fullName evidence="3">50S ribosomal protein L2</fullName>
    </alternativeName>
</protein>
<sequence length="274" mass="30387">MIEIKKAKPTSPGRRHVVSVKNTELHTGKPFKGLVEVKKSKAGRNNTGRITVRHQGGGHKQHYRIVDFKRNKDDITAKVERIEYDPNRSANIALVLYADGERRYIVAPKGLKKDMSVISGEKVDVAVGNCMPLRNIPLGTVIHNIEMKPKKGAQMIRSAGTFAQLVGKDNAYAIIRLRSGEMRRVLLDCRAVIGVVSNSEHNLKSLGKAGAKRWRGIRPTVRGVAMNPVDHPHGGGEGRTSGGRHPVTPWGIPTKGYKTRRNKRSNKLIVQKRK</sequence>
<feature type="chain" id="PRO_0000309920" description="Large ribosomal subunit protein uL2">
    <location>
        <begin position="1"/>
        <end position="274"/>
    </location>
</feature>
<feature type="region of interest" description="Disordered" evidence="2">
    <location>
        <begin position="224"/>
        <end position="274"/>
    </location>
</feature>
<feature type="compositionally biased region" description="Basic residues" evidence="2">
    <location>
        <begin position="257"/>
        <end position="274"/>
    </location>
</feature>
<reference key="1">
    <citation type="journal article" date="2007" name="PLoS ONE">
        <title>Genome sequencing shows that European isolates of Francisella tularensis subspecies tularensis are almost identical to US laboratory strain Schu S4.</title>
        <authorList>
            <person name="Chaudhuri R.R."/>
            <person name="Ren C.-P."/>
            <person name="Desmond L."/>
            <person name="Vincent G.A."/>
            <person name="Silman N.J."/>
            <person name="Brehm J.K."/>
            <person name="Elmore M.J."/>
            <person name="Hudson M.J."/>
            <person name="Forsman M."/>
            <person name="Isherwood K.E."/>
            <person name="Gurycova D."/>
            <person name="Minton N.P."/>
            <person name="Titball R.W."/>
            <person name="Pallen M.J."/>
            <person name="Vipond R."/>
        </authorList>
    </citation>
    <scope>NUCLEOTIDE SEQUENCE [LARGE SCALE GENOMIC DNA]</scope>
    <source>
        <strain>FSC 198</strain>
    </source>
</reference>
<evidence type="ECO:0000255" key="1">
    <source>
        <dbReference type="HAMAP-Rule" id="MF_01320"/>
    </source>
</evidence>
<evidence type="ECO:0000256" key="2">
    <source>
        <dbReference type="SAM" id="MobiDB-lite"/>
    </source>
</evidence>
<evidence type="ECO:0000305" key="3"/>
<name>RL2_FRAT1</name>
<organism>
    <name type="scientific">Francisella tularensis subsp. tularensis (strain FSC 198)</name>
    <dbReference type="NCBI Taxonomy" id="393115"/>
    <lineage>
        <taxon>Bacteria</taxon>
        <taxon>Pseudomonadati</taxon>
        <taxon>Pseudomonadota</taxon>
        <taxon>Gammaproteobacteria</taxon>
        <taxon>Thiotrichales</taxon>
        <taxon>Francisellaceae</taxon>
        <taxon>Francisella</taxon>
    </lineage>
</organism>
<keyword id="KW-0687">Ribonucleoprotein</keyword>
<keyword id="KW-0689">Ribosomal protein</keyword>
<keyword id="KW-0694">RNA-binding</keyword>
<keyword id="KW-0699">rRNA-binding</keyword>
<gene>
    <name evidence="1" type="primary">rplB</name>
    <name type="ordered locus">FTF0328</name>
</gene>
<accession>Q14JB7</accession>